<comment type="catalytic activity">
    <reaction evidence="1">
        <text>(R)-pantothenate + ATP = (R)-4'-phosphopantothenate + ADP + H(+)</text>
        <dbReference type="Rhea" id="RHEA:16373"/>
        <dbReference type="ChEBI" id="CHEBI:10986"/>
        <dbReference type="ChEBI" id="CHEBI:15378"/>
        <dbReference type="ChEBI" id="CHEBI:29032"/>
        <dbReference type="ChEBI" id="CHEBI:30616"/>
        <dbReference type="ChEBI" id="CHEBI:456216"/>
        <dbReference type="EC" id="2.7.1.33"/>
    </reaction>
</comment>
<comment type="pathway">
    <text evidence="1">Cofactor biosynthesis; coenzyme A biosynthesis; CoA from (R)-pantothenate: step 1/5.</text>
</comment>
<comment type="subcellular location">
    <subcellularLocation>
        <location evidence="1">Cytoplasm</location>
    </subcellularLocation>
</comment>
<comment type="similarity">
    <text evidence="1">Belongs to the prokaryotic pantothenate kinase family.</text>
</comment>
<keyword id="KW-0067">ATP-binding</keyword>
<keyword id="KW-0173">Coenzyme A biosynthesis</keyword>
<keyword id="KW-0963">Cytoplasm</keyword>
<keyword id="KW-0418">Kinase</keyword>
<keyword id="KW-0547">Nucleotide-binding</keyword>
<keyword id="KW-0808">Transferase</keyword>
<gene>
    <name evidence="1" type="primary">coaA</name>
    <name type="ordered locus">VV1_1200</name>
</gene>
<feature type="chain" id="PRO_0000194461" description="Pantothenate kinase">
    <location>
        <begin position="1"/>
        <end position="307"/>
    </location>
</feature>
<feature type="binding site" evidence="1">
    <location>
        <begin position="87"/>
        <end position="94"/>
    </location>
    <ligand>
        <name>ATP</name>
        <dbReference type="ChEBI" id="CHEBI:30616"/>
    </ligand>
</feature>
<accession>Q8DD30</accession>
<evidence type="ECO:0000255" key="1">
    <source>
        <dbReference type="HAMAP-Rule" id="MF_00215"/>
    </source>
</evidence>
<reference key="1">
    <citation type="submission" date="2002-12" db="EMBL/GenBank/DDBJ databases">
        <title>Complete genome sequence of Vibrio vulnificus CMCP6.</title>
        <authorList>
            <person name="Rhee J.H."/>
            <person name="Kim S.Y."/>
            <person name="Chung S.S."/>
            <person name="Kim J.J."/>
            <person name="Moon Y.H."/>
            <person name="Jeong H."/>
            <person name="Choy H.E."/>
        </authorList>
    </citation>
    <scope>NUCLEOTIDE SEQUENCE [LARGE SCALE GENOMIC DNA]</scope>
    <source>
        <strain>CMCP6</strain>
    </source>
</reference>
<dbReference type="EC" id="2.7.1.33" evidence="1"/>
<dbReference type="EMBL" id="AE016795">
    <property type="protein sequence ID" value="AAO09661.1"/>
    <property type="molecule type" value="Genomic_DNA"/>
</dbReference>
<dbReference type="RefSeq" id="WP_011079193.1">
    <property type="nucleotide sequence ID" value="NC_004459.3"/>
</dbReference>
<dbReference type="SMR" id="Q8DD30"/>
<dbReference type="KEGG" id="vvu:VV1_1200"/>
<dbReference type="HOGENOM" id="CLU_053818_1_1_6"/>
<dbReference type="UniPathway" id="UPA00241">
    <property type="reaction ID" value="UER00352"/>
</dbReference>
<dbReference type="Proteomes" id="UP000002275">
    <property type="component" value="Chromosome 1"/>
</dbReference>
<dbReference type="GO" id="GO:0005737">
    <property type="term" value="C:cytoplasm"/>
    <property type="evidence" value="ECO:0007669"/>
    <property type="project" value="UniProtKB-SubCell"/>
</dbReference>
<dbReference type="GO" id="GO:0005524">
    <property type="term" value="F:ATP binding"/>
    <property type="evidence" value="ECO:0007669"/>
    <property type="project" value="UniProtKB-UniRule"/>
</dbReference>
<dbReference type="GO" id="GO:0004594">
    <property type="term" value="F:pantothenate kinase activity"/>
    <property type="evidence" value="ECO:0007669"/>
    <property type="project" value="UniProtKB-UniRule"/>
</dbReference>
<dbReference type="GO" id="GO:0015937">
    <property type="term" value="P:coenzyme A biosynthetic process"/>
    <property type="evidence" value="ECO:0007669"/>
    <property type="project" value="UniProtKB-UniRule"/>
</dbReference>
<dbReference type="CDD" id="cd02025">
    <property type="entry name" value="PanK"/>
    <property type="match status" value="1"/>
</dbReference>
<dbReference type="FunFam" id="3.40.50.300:FF:000242">
    <property type="entry name" value="Pantothenate kinase"/>
    <property type="match status" value="1"/>
</dbReference>
<dbReference type="Gene3D" id="3.40.50.300">
    <property type="entry name" value="P-loop containing nucleotide triphosphate hydrolases"/>
    <property type="match status" value="1"/>
</dbReference>
<dbReference type="HAMAP" id="MF_00215">
    <property type="entry name" value="Pantothen_kinase_1"/>
    <property type="match status" value="1"/>
</dbReference>
<dbReference type="InterPro" id="IPR027417">
    <property type="entry name" value="P-loop_NTPase"/>
</dbReference>
<dbReference type="InterPro" id="IPR004566">
    <property type="entry name" value="PanK"/>
</dbReference>
<dbReference type="InterPro" id="IPR006083">
    <property type="entry name" value="PRK/URK"/>
</dbReference>
<dbReference type="NCBIfam" id="TIGR00554">
    <property type="entry name" value="panK_bact"/>
    <property type="match status" value="1"/>
</dbReference>
<dbReference type="PANTHER" id="PTHR10285">
    <property type="entry name" value="URIDINE KINASE"/>
    <property type="match status" value="1"/>
</dbReference>
<dbReference type="Pfam" id="PF00485">
    <property type="entry name" value="PRK"/>
    <property type="match status" value="1"/>
</dbReference>
<dbReference type="PIRSF" id="PIRSF000545">
    <property type="entry name" value="Pantothenate_kin"/>
    <property type="match status" value="1"/>
</dbReference>
<dbReference type="SUPFAM" id="SSF52540">
    <property type="entry name" value="P-loop containing nucleoside triphosphate hydrolases"/>
    <property type="match status" value="1"/>
</dbReference>
<organism>
    <name type="scientific">Vibrio vulnificus (strain CMCP6)</name>
    <dbReference type="NCBI Taxonomy" id="216895"/>
    <lineage>
        <taxon>Bacteria</taxon>
        <taxon>Pseudomonadati</taxon>
        <taxon>Pseudomonadota</taxon>
        <taxon>Gammaproteobacteria</taxon>
        <taxon>Vibrionales</taxon>
        <taxon>Vibrionaceae</taxon>
        <taxon>Vibrio</taxon>
    </lineage>
</organism>
<sequence length="307" mass="35278">MSPFLSFSRATWSELRNSVPMTLSEEDLKALQGINENLTMQEAVEVYLPLSRLLNLYVQARQSRNSVLHQFLNNDEHAPPFVIGIAGSVAVGKSTTARVLCALLSRWENHPKVELVTTDGFLYPKKELDQRGIMHKKGFPESYDMKKLVQFVSDVKAGKPELEVPVYSHITYDITEEVKKVDRPDVLIIEGLNVLQSGMDYPHDPHRVFVSDFLDFSIYVDAESNTIEQWYVERFLKFRKGAFTQPGSYFSHYTQLSEQQAIEKAQQIWRDINGINLTENILPTKERAQLILRKGPNHLVEEILLRK</sequence>
<protein>
    <recommendedName>
        <fullName evidence="1">Pantothenate kinase</fullName>
        <ecNumber evidence="1">2.7.1.33</ecNumber>
    </recommendedName>
    <alternativeName>
        <fullName evidence="1">Pantothenic acid kinase</fullName>
    </alternativeName>
</protein>
<proteinExistence type="inferred from homology"/>
<name>COAA_VIBVU</name>